<feature type="chain" id="PRO_0000448224" description="Coiled-coil domain-containing protein 85B">
    <location>
        <begin position="1"/>
        <end position="200"/>
    </location>
</feature>
<feature type="region of interest" description="Disordered" evidence="4">
    <location>
        <begin position="178"/>
        <end position="200"/>
    </location>
</feature>
<feature type="coiled-coil region" evidence="3">
    <location>
        <begin position="57"/>
        <end position="84"/>
    </location>
</feature>
<feature type="compositionally biased region" description="Low complexity" evidence="4">
    <location>
        <begin position="178"/>
        <end position="188"/>
    </location>
</feature>
<proteinExistence type="inferred from homology"/>
<protein>
    <recommendedName>
        <fullName>Coiled-coil domain-containing protein 85B</fullName>
    </recommendedName>
</protein>
<name>CC85B_DANRE</name>
<keyword id="KW-0965">Cell junction</keyword>
<keyword id="KW-0175">Coiled coil</keyword>
<keyword id="KW-0963">Cytoplasm</keyword>
<keyword id="KW-0206">Cytoskeleton</keyword>
<keyword id="KW-0539">Nucleus</keyword>
<keyword id="KW-1185">Reference proteome</keyword>
<dbReference type="EMBL" id="CR626869">
    <property type="status" value="NOT_ANNOTATED_CDS"/>
    <property type="molecule type" value="Genomic_DNA"/>
</dbReference>
<dbReference type="RefSeq" id="NP_001159626.1">
    <property type="nucleotide sequence ID" value="NM_001166154.1"/>
</dbReference>
<dbReference type="SMR" id="A2CEM9"/>
<dbReference type="FunCoup" id="A2CEM9">
    <property type="interactions" value="453"/>
</dbReference>
<dbReference type="STRING" id="7955.ENSDARP00000082317"/>
<dbReference type="PaxDb" id="7955-ENSDARP00000118959"/>
<dbReference type="Ensembl" id="ENSDART00000087884">
    <property type="protein sequence ID" value="ENSDARP00000082317"/>
    <property type="gene ID" value="ENSDARG00000061543"/>
</dbReference>
<dbReference type="GeneID" id="564324"/>
<dbReference type="KEGG" id="dre:564324"/>
<dbReference type="AGR" id="ZFIN:ZDB-GENE-060130-56"/>
<dbReference type="CTD" id="11007"/>
<dbReference type="ZFIN" id="ZDB-GENE-060130-56">
    <property type="gene designation" value="ccdc85b"/>
</dbReference>
<dbReference type="eggNOG" id="KOG3819">
    <property type="taxonomic scope" value="Eukaryota"/>
</dbReference>
<dbReference type="HOGENOM" id="CLU_117450_0_0_1"/>
<dbReference type="InParanoid" id="A2CEM9"/>
<dbReference type="OMA" id="EEWGPRS"/>
<dbReference type="OrthoDB" id="10056395at2759"/>
<dbReference type="PhylomeDB" id="A2CEM9"/>
<dbReference type="TreeFam" id="TF320243"/>
<dbReference type="PRO" id="PR:A2CEM9"/>
<dbReference type="Proteomes" id="UP000000437">
    <property type="component" value="Chromosome 14"/>
</dbReference>
<dbReference type="Bgee" id="ENSDARG00000061543">
    <property type="expression patterns" value="Expressed in brain and 29 other cell types or tissues"/>
</dbReference>
<dbReference type="GO" id="GO:0005912">
    <property type="term" value="C:adherens junction"/>
    <property type="evidence" value="ECO:0007669"/>
    <property type="project" value="UniProtKB-SubCell"/>
</dbReference>
<dbReference type="GO" id="GO:0005813">
    <property type="term" value="C:centrosome"/>
    <property type="evidence" value="ECO:0007669"/>
    <property type="project" value="UniProtKB-SubCell"/>
</dbReference>
<dbReference type="GO" id="GO:0005737">
    <property type="term" value="C:cytoplasm"/>
    <property type="evidence" value="ECO:0007669"/>
    <property type="project" value="UniProtKB-KW"/>
</dbReference>
<dbReference type="GO" id="GO:0005634">
    <property type="term" value="C:nucleus"/>
    <property type="evidence" value="ECO:0000318"/>
    <property type="project" value="GO_Central"/>
</dbReference>
<dbReference type="GO" id="GO:0045892">
    <property type="term" value="P:negative regulation of DNA-templated transcription"/>
    <property type="evidence" value="ECO:0000318"/>
    <property type="project" value="GO_Central"/>
</dbReference>
<dbReference type="GO" id="GO:0001843">
    <property type="term" value="P:neural tube closure"/>
    <property type="evidence" value="ECO:0000315"/>
    <property type="project" value="ZFIN"/>
</dbReference>
<dbReference type="InterPro" id="IPR019359">
    <property type="entry name" value="CCDC85"/>
</dbReference>
<dbReference type="PANTHER" id="PTHR13546:SF12">
    <property type="entry name" value="COILED-COIL DOMAIN-CONTAINING PROTEIN 85B"/>
    <property type="match status" value="1"/>
</dbReference>
<dbReference type="PANTHER" id="PTHR13546">
    <property type="entry name" value="RE60986P"/>
    <property type="match status" value="1"/>
</dbReference>
<dbReference type="Pfam" id="PF10226">
    <property type="entry name" value="CCDC85"/>
    <property type="match status" value="1"/>
</dbReference>
<organism>
    <name type="scientific">Danio rerio</name>
    <name type="common">Zebrafish</name>
    <name type="synonym">Brachydanio rerio</name>
    <dbReference type="NCBI Taxonomy" id="7955"/>
    <lineage>
        <taxon>Eukaryota</taxon>
        <taxon>Metazoa</taxon>
        <taxon>Chordata</taxon>
        <taxon>Craniata</taxon>
        <taxon>Vertebrata</taxon>
        <taxon>Euteleostomi</taxon>
        <taxon>Actinopterygii</taxon>
        <taxon>Neopterygii</taxon>
        <taxon>Teleostei</taxon>
        <taxon>Ostariophysi</taxon>
        <taxon>Cypriniformes</taxon>
        <taxon>Danionidae</taxon>
        <taxon>Danioninae</taxon>
        <taxon>Danio</taxon>
    </lineage>
</organism>
<reference key="1">
    <citation type="journal article" date="2013" name="Nature">
        <title>The zebrafish reference genome sequence and its relationship to the human genome.</title>
        <authorList>
            <person name="Howe K."/>
            <person name="Clark M.D."/>
            <person name="Torroja C.F."/>
            <person name="Torrance J."/>
            <person name="Berthelot C."/>
            <person name="Muffato M."/>
            <person name="Collins J.E."/>
            <person name="Humphray S."/>
            <person name="McLaren K."/>
            <person name="Matthews L."/>
            <person name="McLaren S."/>
            <person name="Sealy I."/>
            <person name="Caccamo M."/>
            <person name="Churcher C."/>
            <person name="Scott C."/>
            <person name="Barrett J.C."/>
            <person name="Koch R."/>
            <person name="Rauch G.J."/>
            <person name="White S."/>
            <person name="Chow W."/>
            <person name="Kilian B."/>
            <person name="Quintais L.T."/>
            <person name="Guerra-Assuncao J.A."/>
            <person name="Zhou Y."/>
            <person name="Gu Y."/>
            <person name="Yen J."/>
            <person name="Vogel J.H."/>
            <person name="Eyre T."/>
            <person name="Redmond S."/>
            <person name="Banerjee R."/>
            <person name="Chi J."/>
            <person name="Fu B."/>
            <person name="Langley E."/>
            <person name="Maguire S.F."/>
            <person name="Laird G.K."/>
            <person name="Lloyd D."/>
            <person name="Kenyon E."/>
            <person name="Donaldson S."/>
            <person name="Sehra H."/>
            <person name="Almeida-King J."/>
            <person name="Loveland J."/>
            <person name="Trevanion S."/>
            <person name="Jones M."/>
            <person name="Quail M."/>
            <person name="Willey D."/>
            <person name="Hunt A."/>
            <person name="Burton J."/>
            <person name="Sims S."/>
            <person name="McLay K."/>
            <person name="Plumb B."/>
            <person name="Davis J."/>
            <person name="Clee C."/>
            <person name="Oliver K."/>
            <person name="Clark R."/>
            <person name="Riddle C."/>
            <person name="Elliot D."/>
            <person name="Threadgold G."/>
            <person name="Harden G."/>
            <person name="Ware D."/>
            <person name="Begum S."/>
            <person name="Mortimore B."/>
            <person name="Kerry G."/>
            <person name="Heath P."/>
            <person name="Phillimore B."/>
            <person name="Tracey A."/>
            <person name="Corby N."/>
            <person name="Dunn M."/>
            <person name="Johnson C."/>
            <person name="Wood J."/>
            <person name="Clark S."/>
            <person name="Pelan S."/>
            <person name="Griffiths G."/>
            <person name="Smith M."/>
            <person name="Glithero R."/>
            <person name="Howden P."/>
            <person name="Barker N."/>
            <person name="Lloyd C."/>
            <person name="Stevens C."/>
            <person name="Harley J."/>
            <person name="Holt K."/>
            <person name="Panagiotidis G."/>
            <person name="Lovell J."/>
            <person name="Beasley H."/>
            <person name="Henderson C."/>
            <person name="Gordon D."/>
            <person name="Auger K."/>
            <person name="Wright D."/>
            <person name="Collins J."/>
            <person name="Raisen C."/>
            <person name="Dyer L."/>
            <person name="Leung K."/>
            <person name="Robertson L."/>
            <person name="Ambridge K."/>
            <person name="Leongamornlert D."/>
            <person name="McGuire S."/>
            <person name="Gilderthorp R."/>
            <person name="Griffiths C."/>
            <person name="Manthravadi D."/>
            <person name="Nichol S."/>
            <person name="Barker G."/>
            <person name="Whitehead S."/>
            <person name="Kay M."/>
            <person name="Brown J."/>
            <person name="Murnane C."/>
            <person name="Gray E."/>
            <person name="Humphries M."/>
            <person name="Sycamore N."/>
            <person name="Barker D."/>
            <person name="Saunders D."/>
            <person name="Wallis J."/>
            <person name="Babbage A."/>
            <person name="Hammond S."/>
            <person name="Mashreghi-Mohammadi M."/>
            <person name="Barr L."/>
            <person name="Martin S."/>
            <person name="Wray P."/>
            <person name="Ellington A."/>
            <person name="Matthews N."/>
            <person name="Ellwood M."/>
            <person name="Woodmansey R."/>
            <person name="Clark G."/>
            <person name="Cooper J."/>
            <person name="Tromans A."/>
            <person name="Grafham D."/>
            <person name="Skuce C."/>
            <person name="Pandian R."/>
            <person name="Andrews R."/>
            <person name="Harrison E."/>
            <person name="Kimberley A."/>
            <person name="Garnett J."/>
            <person name="Fosker N."/>
            <person name="Hall R."/>
            <person name="Garner P."/>
            <person name="Kelly D."/>
            <person name="Bird C."/>
            <person name="Palmer S."/>
            <person name="Gehring I."/>
            <person name="Berger A."/>
            <person name="Dooley C.M."/>
            <person name="Ersan-Urun Z."/>
            <person name="Eser C."/>
            <person name="Geiger H."/>
            <person name="Geisler M."/>
            <person name="Karotki L."/>
            <person name="Kirn A."/>
            <person name="Konantz J."/>
            <person name="Konantz M."/>
            <person name="Oberlander M."/>
            <person name="Rudolph-Geiger S."/>
            <person name="Teucke M."/>
            <person name="Lanz C."/>
            <person name="Raddatz G."/>
            <person name="Osoegawa K."/>
            <person name="Zhu B."/>
            <person name="Rapp A."/>
            <person name="Widaa S."/>
            <person name="Langford C."/>
            <person name="Yang F."/>
            <person name="Schuster S.C."/>
            <person name="Carter N.P."/>
            <person name="Harrow J."/>
            <person name="Ning Z."/>
            <person name="Herrero J."/>
            <person name="Searle S.M."/>
            <person name="Enright A."/>
            <person name="Geisler R."/>
            <person name="Plasterk R.H."/>
            <person name="Lee C."/>
            <person name="Westerfield M."/>
            <person name="de Jong P.J."/>
            <person name="Zon L.I."/>
            <person name="Postlethwait J.H."/>
            <person name="Nusslein-Volhard C."/>
            <person name="Hubbard T.J."/>
            <person name="Roest Crollius H."/>
            <person name="Rogers J."/>
            <person name="Stemple D.L."/>
        </authorList>
    </citation>
    <scope>NUCLEOTIDE SEQUENCE [LARGE SCALE GENOMIC DNA]</scope>
    <source>
        <strain>Tuebingen</strain>
    </source>
</reference>
<reference key="2">
    <citation type="journal article" date="2014" name="Mol. Biol. Cell">
        <title>DIPA-family coiled-coils bind conserved isoform-specific head domain of p120-catenin family: potential roles in hydrocephalus and heterotopia.</title>
        <authorList>
            <person name="Markham N.O."/>
            <person name="Doll C.A."/>
            <person name="Dohn M.R."/>
            <person name="Miller R.K."/>
            <person name="Yu H."/>
            <person name="Coffey R.J."/>
            <person name="McCrea P.D."/>
            <person name="Gamse J.T."/>
            <person name="Reynolds A.B."/>
        </authorList>
    </citation>
    <scope>FUNCTION</scope>
    <scope>DISRUPTION PHENOTYPE</scope>
</reference>
<evidence type="ECO:0000250" key="1">
    <source>
        <dbReference type="UniProtKB" id="Q15834"/>
    </source>
</evidence>
<evidence type="ECO:0000250" key="2">
    <source>
        <dbReference type="UniProtKB" id="Q6PDY0"/>
    </source>
</evidence>
<evidence type="ECO:0000255" key="3"/>
<evidence type="ECO:0000256" key="4">
    <source>
        <dbReference type="SAM" id="MobiDB-lite"/>
    </source>
</evidence>
<evidence type="ECO:0000269" key="5">
    <source>
    </source>
</evidence>
<evidence type="ECO:0000305" key="6"/>
<evidence type="ECO:0000305" key="7">
    <source>
    </source>
</evidence>
<gene>
    <name type="primary">ccdc85b</name>
</gene>
<sequence length="200" mass="22562">MGSDSEILNRELSKLSDEDLLACTKEELVNRLRKEESDKMSALIQRGRLIKEVNKQLQGHLLEIRELKVINQRLQEENQELRDLCCFLDDDRLKVKKLAREWQLFGHHAAKVMREDLGGYLKKLADLERMQDGLVKENLDLKELCLVLEEECVSRSDSSPGGSTDLNIPCMVARDVGDGSSSTGSVGSPDQLHLVCSPDD</sequence>
<comment type="function">
    <text evidence="1 2 7">Functions as a transcriptional repressor. May inhibit the activity of CTNNB1 in a TP53-dependent manner and thus regulate cell growth (By similarity). May function in adipocyte differentiation, negatively regulating mitotic clonal expansion (By similarity). Plays a role in cell-cell adhesion and epithelium development through its interaction with proteins of the beta-catenin family (Probable).</text>
</comment>
<comment type="subcellular location">
    <subcellularLocation>
        <location evidence="1">Nucleus</location>
    </subcellularLocation>
    <subcellularLocation>
        <location evidence="1">Cytoplasm</location>
        <location evidence="1">Cytoskeleton</location>
        <location evidence="1">Microtubule organizing center</location>
        <location evidence="1">Centrosome</location>
    </subcellularLocation>
    <subcellularLocation>
        <location evidence="1">Cell junction</location>
        <location evidence="1">Adherens junction</location>
    </subcellularLocation>
</comment>
<comment type="disruption phenotype">
    <text evidence="5">Morpholino knockdown of the protein results in neural tube closure defects and a disorganization of the neuroepithelium (PubMed:25009281). This developmental phenotype is associated with an alteration of cell-cell junctions (PubMed:25009281).</text>
</comment>
<comment type="similarity">
    <text evidence="6">Belongs to the CCDC85 family.</text>
</comment>
<accession>A2CEM9</accession>